<proteinExistence type="inferred from homology"/>
<accession>Q0HE83</accession>
<protein>
    <recommendedName>
        <fullName evidence="1">UDP-N-acetylglucosamine--N-acetylmuramyl-(pentapeptide) pyrophosphoryl-undecaprenol N-acetylglucosamine transferase</fullName>
        <ecNumber evidence="1">2.4.1.227</ecNumber>
    </recommendedName>
    <alternativeName>
        <fullName evidence="1">Undecaprenyl-PP-MurNAc-pentapeptide-UDPGlcNAc GlcNAc transferase</fullName>
    </alternativeName>
</protein>
<evidence type="ECO:0000255" key="1">
    <source>
        <dbReference type="HAMAP-Rule" id="MF_00033"/>
    </source>
</evidence>
<gene>
    <name evidence="1" type="primary">murG</name>
    <name type="ordered locus">Shewmr4_3570</name>
</gene>
<sequence length="362" mass="38394">MTDAGKRILVMAGGTGGHVFPALAVAKYLAQQGWQVRWLGTADRMEARLVPQYGFDIDFIDIKGVRGNGLVRKLAAPFKVVRSILQAKAVIAEFKPDVVLGMGGFASGPGGVAAKLAGVPLVLHEQNAIPGMTNKLLSRIANQVLCAFKNTFTQVKAKVVGNPIRRELIALGAEPKQAADDALKVLVVGGSLGAKVFNDLMPEVVAALSKQQSITVWHQVGKDNLTGVKSAYQQQGQDGGVNVAEFIDDMEAAYRWADVVLCRAGALTVSELAAVGLPSILVPYPHAVDDHQTRNAQVLVEAGAAFLLPQAILDVNKLVSKLQLLANDRAELAQMGQRAREVAVLDATEQVAQVCIALAEKG</sequence>
<reference key="1">
    <citation type="submission" date="2006-08" db="EMBL/GenBank/DDBJ databases">
        <title>Complete sequence of Shewanella sp. MR-4.</title>
        <authorList>
            <consortium name="US DOE Joint Genome Institute"/>
            <person name="Copeland A."/>
            <person name="Lucas S."/>
            <person name="Lapidus A."/>
            <person name="Barry K."/>
            <person name="Detter J.C."/>
            <person name="Glavina del Rio T."/>
            <person name="Hammon N."/>
            <person name="Israni S."/>
            <person name="Dalin E."/>
            <person name="Tice H."/>
            <person name="Pitluck S."/>
            <person name="Kiss H."/>
            <person name="Brettin T."/>
            <person name="Bruce D."/>
            <person name="Han C."/>
            <person name="Tapia R."/>
            <person name="Gilna P."/>
            <person name="Schmutz J."/>
            <person name="Larimer F."/>
            <person name="Land M."/>
            <person name="Hauser L."/>
            <person name="Kyrpides N."/>
            <person name="Mikhailova N."/>
            <person name="Nealson K."/>
            <person name="Konstantinidis K."/>
            <person name="Klappenbach J."/>
            <person name="Tiedje J."/>
            <person name="Richardson P."/>
        </authorList>
    </citation>
    <scope>NUCLEOTIDE SEQUENCE [LARGE SCALE GENOMIC DNA]</scope>
    <source>
        <strain>MR-4</strain>
    </source>
</reference>
<keyword id="KW-0131">Cell cycle</keyword>
<keyword id="KW-0132">Cell division</keyword>
<keyword id="KW-0997">Cell inner membrane</keyword>
<keyword id="KW-1003">Cell membrane</keyword>
<keyword id="KW-0133">Cell shape</keyword>
<keyword id="KW-0961">Cell wall biogenesis/degradation</keyword>
<keyword id="KW-0328">Glycosyltransferase</keyword>
<keyword id="KW-0472">Membrane</keyword>
<keyword id="KW-0573">Peptidoglycan synthesis</keyword>
<keyword id="KW-0808">Transferase</keyword>
<comment type="function">
    <text evidence="1">Cell wall formation. Catalyzes the transfer of a GlcNAc subunit on undecaprenyl-pyrophosphoryl-MurNAc-pentapeptide (lipid intermediate I) to form undecaprenyl-pyrophosphoryl-MurNAc-(pentapeptide)GlcNAc (lipid intermediate II).</text>
</comment>
<comment type="catalytic activity">
    <reaction evidence="1">
        <text>di-trans,octa-cis-undecaprenyl diphospho-N-acetyl-alpha-D-muramoyl-L-alanyl-D-glutamyl-meso-2,6-diaminopimeloyl-D-alanyl-D-alanine + UDP-N-acetyl-alpha-D-glucosamine = di-trans,octa-cis-undecaprenyl diphospho-[N-acetyl-alpha-D-glucosaminyl-(1-&gt;4)]-N-acetyl-alpha-D-muramoyl-L-alanyl-D-glutamyl-meso-2,6-diaminopimeloyl-D-alanyl-D-alanine + UDP + H(+)</text>
        <dbReference type="Rhea" id="RHEA:31227"/>
        <dbReference type="ChEBI" id="CHEBI:15378"/>
        <dbReference type="ChEBI" id="CHEBI:57705"/>
        <dbReference type="ChEBI" id="CHEBI:58223"/>
        <dbReference type="ChEBI" id="CHEBI:61387"/>
        <dbReference type="ChEBI" id="CHEBI:61388"/>
        <dbReference type="EC" id="2.4.1.227"/>
    </reaction>
</comment>
<comment type="pathway">
    <text evidence="1">Cell wall biogenesis; peptidoglycan biosynthesis.</text>
</comment>
<comment type="subcellular location">
    <subcellularLocation>
        <location evidence="1">Cell inner membrane</location>
        <topology evidence="1">Peripheral membrane protein</topology>
        <orientation evidence="1">Cytoplasmic side</orientation>
    </subcellularLocation>
</comment>
<comment type="similarity">
    <text evidence="1">Belongs to the glycosyltransferase 28 family. MurG subfamily.</text>
</comment>
<name>MURG_SHESM</name>
<dbReference type="EC" id="2.4.1.227" evidence="1"/>
<dbReference type="EMBL" id="CP000446">
    <property type="protein sequence ID" value="ABI40634.1"/>
    <property type="molecule type" value="Genomic_DNA"/>
</dbReference>
<dbReference type="RefSeq" id="WP_011624297.1">
    <property type="nucleotide sequence ID" value="NC_008321.1"/>
</dbReference>
<dbReference type="SMR" id="Q0HE83"/>
<dbReference type="CAZy" id="GT28">
    <property type="family name" value="Glycosyltransferase Family 28"/>
</dbReference>
<dbReference type="KEGG" id="she:Shewmr4_3570"/>
<dbReference type="HOGENOM" id="CLU_037404_2_0_6"/>
<dbReference type="UniPathway" id="UPA00219"/>
<dbReference type="GO" id="GO:0005886">
    <property type="term" value="C:plasma membrane"/>
    <property type="evidence" value="ECO:0007669"/>
    <property type="project" value="UniProtKB-SubCell"/>
</dbReference>
<dbReference type="GO" id="GO:0051991">
    <property type="term" value="F:UDP-N-acetyl-D-glucosamine:N-acetylmuramoyl-L-alanyl-D-glutamyl-meso-2,6-diaminopimelyl-D-alanyl-D-alanine-diphosphoundecaprenol 4-beta-N-acetylglucosaminlytransferase activity"/>
    <property type="evidence" value="ECO:0007669"/>
    <property type="project" value="RHEA"/>
</dbReference>
<dbReference type="GO" id="GO:0050511">
    <property type="term" value="F:undecaprenyldiphospho-muramoylpentapeptide beta-N-acetylglucosaminyltransferase activity"/>
    <property type="evidence" value="ECO:0007669"/>
    <property type="project" value="UniProtKB-UniRule"/>
</dbReference>
<dbReference type="GO" id="GO:0005975">
    <property type="term" value="P:carbohydrate metabolic process"/>
    <property type="evidence" value="ECO:0007669"/>
    <property type="project" value="InterPro"/>
</dbReference>
<dbReference type="GO" id="GO:0051301">
    <property type="term" value="P:cell division"/>
    <property type="evidence" value="ECO:0007669"/>
    <property type="project" value="UniProtKB-KW"/>
</dbReference>
<dbReference type="GO" id="GO:0071555">
    <property type="term" value="P:cell wall organization"/>
    <property type="evidence" value="ECO:0007669"/>
    <property type="project" value="UniProtKB-KW"/>
</dbReference>
<dbReference type="GO" id="GO:0030259">
    <property type="term" value="P:lipid glycosylation"/>
    <property type="evidence" value="ECO:0007669"/>
    <property type="project" value="UniProtKB-UniRule"/>
</dbReference>
<dbReference type="GO" id="GO:0009252">
    <property type="term" value="P:peptidoglycan biosynthetic process"/>
    <property type="evidence" value="ECO:0007669"/>
    <property type="project" value="UniProtKB-UniRule"/>
</dbReference>
<dbReference type="GO" id="GO:0008360">
    <property type="term" value="P:regulation of cell shape"/>
    <property type="evidence" value="ECO:0007669"/>
    <property type="project" value="UniProtKB-KW"/>
</dbReference>
<dbReference type="CDD" id="cd03785">
    <property type="entry name" value="GT28_MurG"/>
    <property type="match status" value="1"/>
</dbReference>
<dbReference type="Gene3D" id="3.40.50.2000">
    <property type="entry name" value="Glycogen Phosphorylase B"/>
    <property type="match status" value="2"/>
</dbReference>
<dbReference type="HAMAP" id="MF_00033">
    <property type="entry name" value="MurG"/>
    <property type="match status" value="1"/>
</dbReference>
<dbReference type="InterPro" id="IPR006009">
    <property type="entry name" value="GlcNAc_MurG"/>
</dbReference>
<dbReference type="InterPro" id="IPR007235">
    <property type="entry name" value="Glyco_trans_28_C"/>
</dbReference>
<dbReference type="InterPro" id="IPR004276">
    <property type="entry name" value="GlycoTrans_28_N"/>
</dbReference>
<dbReference type="NCBIfam" id="TIGR01133">
    <property type="entry name" value="murG"/>
    <property type="match status" value="1"/>
</dbReference>
<dbReference type="PANTHER" id="PTHR21015:SF22">
    <property type="entry name" value="GLYCOSYLTRANSFERASE"/>
    <property type="match status" value="1"/>
</dbReference>
<dbReference type="PANTHER" id="PTHR21015">
    <property type="entry name" value="UDP-N-ACETYLGLUCOSAMINE--N-ACETYLMURAMYL-(PENTAPEPTIDE) PYROPHOSPHORYL-UNDECAPRENOL N-ACETYLGLUCOSAMINE TRANSFERASE 1"/>
    <property type="match status" value="1"/>
</dbReference>
<dbReference type="Pfam" id="PF04101">
    <property type="entry name" value="Glyco_tran_28_C"/>
    <property type="match status" value="1"/>
</dbReference>
<dbReference type="Pfam" id="PF03033">
    <property type="entry name" value="Glyco_transf_28"/>
    <property type="match status" value="1"/>
</dbReference>
<dbReference type="SUPFAM" id="SSF53756">
    <property type="entry name" value="UDP-Glycosyltransferase/glycogen phosphorylase"/>
    <property type="match status" value="1"/>
</dbReference>
<organism>
    <name type="scientific">Shewanella sp. (strain MR-4)</name>
    <dbReference type="NCBI Taxonomy" id="60480"/>
    <lineage>
        <taxon>Bacteria</taxon>
        <taxon>Pseudomonadati</taxon>
        <taxon>Pseudomonadota</taxon>
        <taxon>Gammaproteobacteria</taxon>
        <taxon>Alteromonadales</taxon>
        <taxon>Shewanellaceae</taxon>
        <taxon>Shewanella</taxon>
    </lineage>
</organism>
<feature type="chain" id="PRO_1000002691" description="UDP-N-acetylglucosamine--N-acetylmuramyl-(pentapeptide) pyrophosphoryl-undecaprenol N-acetylglucosamine transferase">
    <location>
        <begin position="1"/>
        <end position="362"/>
    </location>
</feature>
<feature type="binding site" evidence="1">
    <location>
        <begin position="15"/>
        <end position="17"/>
    </location>
    <ligand>
        <name>UDP-N-acetyl-alpha-D-glucosamine</name>
        <dbReference type="ChEBI" id="CHEBI:57705"/>
    </ligand>
</feature>
<feature type="binding site" evidence="1">
    <location>
        <position position="127"/>
    </location>
    <ligand>
        <name>UDP-N-acetyl-alpha-D-glucosamine</name>
        <dbReference type="ChEBI" id="CHEBI:57705"/>
    </ligand>
</feature>
<feature type="binding site" evidence="1">
    <location>
        <position position="165"/>
    </location>
    <ligand>
        <name>UDP-N-acetyl-alpha-D-glucosamine</name>
        <dbReference type="ChEBI" id="CHEBI:57705"/>
    </ligand>
</feature>
<feature type="binding site" evidence="1">
    <location>
        <position position="191"/>
    </location>
    <ligand>
        <name>UDP-N-acetyl-alpha-D-glucosamine</name>
        <dbReference type="ChEBI" id="CHEBI:57705"/>
    </ligand>
</feature>
<feature type="binding site" evidence="1">
    <location>
        <position position="247"/>
    </location>
    <ligand>
        <name>UDP-N-acetyl-alpha-D-glucosamine</name>
        <dbReference type="ChEBI" id="CHEBI:57705"/>
    </ligand>
</feature>
<feature type="binding site" evidence="1">
    <location>
        <begin position="266"/>
        <end position="271"/>
    </location>
    <ligand>
        <name>UDP-N-acetyl-alpha-D-glucosamine</name>
        <dbReference type="ChEBI" id="CHEBI:57705"/>
    </ligand>
</feature>
<feature type="binding site" evidence="1">
    <location>
        <position position="292"/>
    </location>
    <ligand>
        <name>UDP-N-acetyl-alpha-D-glucosamine</name>
        <dbReference type="ChEBI" id="CHEBI:57705"/>
    </ligand>
</feature>